<organism>
    <name type="scientific">Citrobacter koseri (strain ATCC BAA-895 / CDC 4225-83 / SGSC4696)</name>
    <dbReference type="NCBI Taxonomy" id="290338"/>
    <lineage>
        <taxon>Bacteria</taxon>
        <taxon>Pseudomonadati</taxon>
        <taxon>Pseudomonadota</taxon>
        <taxon>Gammaproteobacteria</taxon>
        <taxon>Enterobacterales</taxon>
        <taxon>Enterobacteriaceae</taxon>
        <taxon>Citrobacter</taxon>
    </lineage>
</organism>
<reference key="1">
    <citation type="submission" date="2007-08" db="EMBL/GenBank/DDBJ databases">
        <authorList>
            <consortium name="The Citrobacter koseri Genome Sequencing Project"/>
            <person name="McClelland M."/>
            <person name="Sanderson E.K."/>
            <person name="Porwollik S."/>
            <person name="Spieth J."/>
            <person name="Clifton W.S."/>
            <person name="Latreille P."/>
            <person name="Courtney L."/>
            <person name="Wang C."/>
            <person name="Pepin K."/>
            <person name="Bhonagiri V."/>
            <person name="Nash W."/>
            <person name="Johnson M."/>
            <person name="Thiruvilangam P."/>
            <person name="Wilson R."/>
        </authorList>
    </citation>
    <scope>NUCLEOTIDE SEQUENCE [LARGE SCALE GENOMIC DNA]</scope>
    <source>
        <strain>ATCC BAA-895 / CDC 4225-83 / SGSC4696</strain>
    </source>
</reference>
<feature type="chain" id="PRO_1000068815" description="Protein DsrB">
    <location>
        <begin position="1"/>
        <end position="62"/>
    </location>
</feature>
<keyword id="KW-1185">Reference proteome</keyword>
<dbReference type="EMBL" id="CP000822">
    <property type="protein sequence ID" value="ABV12137.1"/>
    <property type="molecule type" value="Genomic_DNA"/>
</dbReference>
<dbReference type="RefSeq" id="WP_012131894.1">
    <property type="nucleotide sequence ID" value="NC_009792.1"/>
</dbReference>
<dbReference type="SMR" id="A8AF74"/>
<dbReference type="GeneID" id="45135154"/>
<dbReference type="KEGG" id="cko:CKO_00991"/>
<dbReference type="HOGENOM" id="CLU_189289_0_0_6"/>
<dbReference type="OrthoDB" id="6548256at2"/>
<dbReference type="Proteomes" id="UP000008148">
    <property type="component" value="Chromosome"/>
</dbReference>
<dbReference type="HAMAP" id="MF_01549">
    <property type="entry name" value="DsrB"/>
    <property type="match status" value="1"/>
</dbReference>
<dbReference type="InterPro" id="IPR019717">
    <property type="entry name" value="Dextransucrase_DSRB"/>
</dbReference>
<dbReference type="NCBIfam" id="NF007981">
    <property type="entry name" value="PRK10708.1"/>
    <property type="match status" value="1"/>
</dbReference>
<dbReference type="Pfam" id="PF10781">
    <property type="entry name" value="DSRB"/>
    <property type="match status" value="1"/>
</dbReference>
<gene>
    <name evidence="1" type="primary">dsrB</name>
    <name type="ordered locus">CKO_00991</name>
</gene>
<name>DSRB_CITK8</name>
<protein>
    <recommendedName>
        <fullName evidence="1">Protein DsrB</fullName>
    </recommendedName>
</protein>
<proteinExistence type="inferred from homology"/>
<comment type="similarity">
    <text evidence="1">Belongs to the DsrB family.</text>
</comment>
<evidence type="ECO:0000255" key="1">
    <source>
        <dbReference type="HAMAP-Rule" id="MF_01549"/>
    </source>
</evidence>
<accession>A8AF74</accession>
<sequence>MKVNDRVTVKTDGGPRRPGVVLAVEEFSEGTMYLVSLEDYPLGIWFFNESGHQDGIFVEKTE</sequence>